<protein>
    <recommendedName>
        <fullName evidence="3">Transcriptional activator protein AhyR</fullName>
    </recommendedName>
</protein>
<gene>
    <name evidence="2" type="primary">ahyR</name>
</gene>
<organism>
    <name type="scientific">Aeromonas hydrophila</name>
    <dbReference type="NCBI Taxonomy" id="644"/>
    <lineage>
        <taxon>Bacteria</taxon>
        <taxon>Pseudomonadati</taxon>
        <taxon>Pseudomonadota</taxon>
        <taxon>Gammaproteobacteria</taxon>
        <taxon>Aeromonadales</taxon>
        <taxon>Aeromonadaceae</taxon>
        <taxon>Aeromonas</taxon>
    </lineage>
</organism>
<evidence type="ECO:0000255" key="1">
    <source>
        <dbReference type="PROSITE-ProRule" id="PRU00411"/>
    </source>
</evidence>
<evidence type="ECO:0000303" key="2">
    <source>
    </source>
</evidence>
<evidence type="ECO:0000305" key="3"/>
<dbReference type="EMBL" id="X89469">
    <property type="protein sequence ID" value="CAA61654.1"/>
    <property type="molecule type" value="Genomic_DNA"/>
</dbReference>
<dbReference type="PIR" id="S57939">
    <property type="entry name" value="S57939"/>
</dbReference>
<dbReference type="RefSeq" id="WP_005315931.1">
    <property type="nucleotide sequence ID" value="NZ_WTZJ01000005.1"/>
</dbReference>
<dbReference type="SMR" id="P0A3J5"/>
<dbReference type="eggNOG" id="COG2771">
    <property type="taxonomic scope" value="Bacteria"/>
</dbReference>
<dbReference type="GO" id="GO:0003677">
    <property type="term" value="F:DNA binding"/>
    <property type="evidence" value="ECO:0007669"/>
    <property type="project" value="UniProtKB-KW"/>
</dbReference>
<dbReference type="GO" id="GO:0009372">
    <property type="term" value="P:quorum sensing"/>
    <property type="evidence" value="ECO:0007669"/>
    <property type="project" value="UniProtKB-KW"/>
</dbReference>
<dbReference type="GO" id="GO:0006355">
    <property type="term" value="P:regulation of DNA-templated transcription"/>
    <property type="evidence" value="ECO:0007669"/>
    <property type="project" value="InterPro"/>
</dbReference>
<dbReference type="CDD" id="cd06170">
    <property type="entry name" value="LuxR_C_like"/>
    <property type="match status" value="1"/>
</dbReference>
<dbReference type="Gene3D" id="3.30.450.80">
    <property type="entry name" value="Transcription factor LuxR-like, autoinducer-binding domain"/>
    <property type="match status" value="1"/>
</dbReference>
<dbReference type="Gene3D" id="1.10.10.10">
    <property type="entry name" value="Winged helix-like DNA-binding domain superfamily/Winged helix DNA-binding domain"/>
    <property type="match status" value="1"/>
</dbReference>
<dbReference type="InterPro" id="IPR016032">
    <property type="entry name" value="Sig_transdc_resp-reg_C-effctor"/>
</dbReference>
<dbReference type="InterPro" id="IPR005143">
    <property type="entry name" value="TF_LuxR_autoind-bd_dom"/>
</dbReference>
<dbReference type="InterPro" id="IPR036693">
    <property type="entry name" value="TF_LuxR_autoind-bd_dom_sf"/>
</dbReference>
<dbReference type="InterPro" id="IPR000792">
    <property type="entry name" value="Tscrpt_reg_LuxR_C"/>
</dbReference>
<dbReference type="InterPro" id="IPR036388">
    <property type="entry name" value="WH-like_DNA-bd_sf"/>
</dbReference>
<dbReference type="PANTHER" id="PTHR44688">
    <property type="entry name" value="DNA-BINDING TRANSCRIPTIONAL ACTIVATOR DEVR_DOSR"/>
    <property type="match status" value="1"/>
</dbReference>
<dbReference type="PANTHER" id="PTHR44688:SF16">
    <property type="entry name" value="DNA-BINDING TRANSCRIPTIONAL ACTIVATOR DEVR_DOSR"/>
    <property type="match status" value="1"/>
</dbReference>
<dbReference type="Pfam" id="PF03472">
    <property type="entry name" value="Autoind_bind"/>
    <property type="match status" value="1"/>
</dbReference>
<dbReference type="Pfam" id="PF00196">
    <property type="entry name" value="GerE"/>
    <property type="match status" value="1"/>
</dbReference>
<dbReference type="PRINTS" id="PR00038">
    <property type="entry name" value="HTHLUXR"/>
</dbReference>
<dbReference type="SMART" id="SM00421">
    <property type="entry name" value="HTH_LUXR"/>
    <property type="match status" value="1"/>
</dbReference>
<dbReference type="SUPFAM" id="SSF46894">
    <property type="entry name" value="C-terminal effector domain of the bipartite response regulators"/>
    <property type="match status" value="1"/>
</dbReference>
<dbReference type="SUPFAM" id="SSF75516">
    <property type="entry name" value="Pheromone-binding domain of LuxR-like quorum-sensing transcription factors"/>
    <property type="match status" value="1"/>
</dbReference>
<dbReference type="PROSITE" id="PS50043">
    <property type="entry name" value="HTH_LUXR_2"/>
    <property type="match status" value="1"/>
</dbReference>
<comment type="function">
    <text>Functions as a BHL-responsive transcriptional regulator.</text>
</comment>
<comment type="similarity">
    <text evidence="3">Belongs to the autoinducer-regulated transcriptional regulatory protein family.</text>
</comment>
<proteinExistence type="inferred from homology"/>
<name>AHYR_AERHY</name>
<accession>P0A3J5</accession>
<accession>Q44059</accession>
<feature type="chain" id="PRO_0000184137" description="Transcriptional activator protein AhyR">
    <location>
        <begin position="1"/>
        <end position="260"/>
    </location>
</feature>
<feature type="domain" description="HTH luxR-type" evidence="1">
    <location>
        <begin position="176"/>
        <end position="241"/>
    </location>
</feature>
<feature type="DNA-binding region" description="H-T-H motif" evidence="1">
    <location>
        <begin position="200"/>
        <end position="219"/>
    </location>
</feature>
<sequence length="260" mass="29350">MKQDQLLEYLEHFTSVTDGDRLAELIGRFTLGMGYDYYRFALIIPMSMQRPKVVLFNQCPDSWVQAYTANHMLACDPIIQLARKQTLPIYWNRLDERARFLQEGSLDVMGLAAEFGLRNGISFPLHGAAGENGILSFITAERASSDLLLESSPILSWMSNYIFEAAIRIVRVSLREDDPQEALTDRETECLFWASEGKTSGEIACILGITERTVNYHLNQVTRKTGSMNRYQAIAKGVSSGILLPNLEQVVVTNFPKLMQ</sequence>
<reference key="1">
    <citation type="journal article" date="1997" name="J. Bacteriol.">
        <title>Quorum sensing in Aeromonas hydrophila and Aeromonas salmonicida: identification of the LuxRI homologs AhyRI and AsaRI and their cognate N-acylhomoserine lactone signal molecules.</title>
        <authorList>
            <person name="Swift S."/>
            <person name="Karlyshev A.V."/>
            <person name="Fish L."/>
            <person name="Durant E.L."/>
            <person name="Winson M.K."/>
            <person name="Chhabra S.R."/>
            <person name="Williams P."/>
            <person name="Macintyre S."/>
            <person name="Stewart G.S.A.B."/>
        </authorList>
    </citation>
    <scope>NUCLEOTIDE SEQUENCE [GENOMIC DNA]</scope>
    <source>
        <strain>A1</strain>
    </source>
</reference>
<keyword id="KW-0010">Activator</keyword>
<keyword id="KW-0238">DNA-binding</keyword>
<keyword id="KW-0673">Quorum sensing</keyword>
<keyword id="KW-0804">Transcription</keyword>
<keyword id="KW-0805">Transcription regulation</keyword>